<name>PSMA1_STAAE</name>
<keyword id="KW-0204">Cytolysis</keyword>
<keyword id="KW-0843">Virulence</keyword>
<proteinExistence type="inferred from homology"/>
<dbReference type="EMBL" id="AP009351">
    <property type="protein sequence ID" value="BAH22635.1"/>
    <property type="molecule type" value="Genomic_DNA"/>
</dbReference>
<dbReference type="SMR" id="P0C7Y5"/>
<dbReference type="KEGG" id="sae:NWMN_2619"/>
<dbReference type="HOGENOM" id="CLU_222042_0_0_9"/>
<dbReference type="Proteomes" id="UP000006386">
    <property type="component" value="Chromosome"/>
</dbReference>
<dbReference type="GO" id="GO:0031640">
    <property type="term" value="P:killing of cells of another organism"/>
    <property type="evidence" value="ECO:0007669"/>
    <property type="project" value="UniProtKB-KW"/>
</dbReference>
<dbReference type="InterPro" id="IPR031429">
    <property type="entry name" value="PSM_alpha"/>
</dbReference>
<dbReference type="NCBIfam" id="NF033425">
    <property type="entry name" value="PSM_alpha_1_2"/>
    <property type="match status" value="1"/>
</dbReference>
<dbReference type="Pfam" id="PF17063">
    <property type="entry name" value="PSMalpha"/>
    <property type="match status" value="1"/>
</dbReference>
<gene>
    <name type="primary">psmA1</name>
    <name type="ordered locus">NWMN_0417.4</name>
    <name type="ORF">NWMN_2619</name>
</gene>
<comment type="function">
    <text evidence="1">Peptide which can recruit, activate and subsequently lyse human neutrophils, thus eliminating the main cellular defense against infection.</text>
</comment>
<comment type="similarity">
    <text evidence="2">Belongs to the phenol-soluble modulin alpha peptides family.</text>
</comment>
<reference key="1">
    <citation type="journal article" date="2008" name="J. Bacteriol.">
        <title>Genome sequence of Staphylococcus aureus strain Newman and comparative analysis of staphylococcal genomes: polymorphism and evolution of two major pathogenicity islands.</title>
        <authorList>
            <person name="Baba T."/>
            <person name="Bae T."/>
            <person name="Schneewind O."/>
            <person name="Takeuchi F."/>
            <person name="Hiramatsu K."/>
        </authorList>
    </citation>
    <scope>NUCLEOTIDE SEQUENCE [LARGE SCALE GENOMIC DNA]</scope>
    <source>
        <strain>Newman</strain>
    </source>
</reference>
<feature type="peptide" id="PRO_0000345036" description="Phenol-soluble modulin alpha 1 peptide">
    <location>
        <begin position="1"/>
        <end position="21"/>
    </location>
</feature>
<sequence>MGIIAGIIKVIKSLIEQFTGK</sequence>
<organism>
    <name type="scientific">Staphylococcus aureus (strain Newman)</name>
    <dbReference type="NCBI Taxonomy" id="426430"/>
    <lineage>
        <taxon>Bacteria</taxon>
        <taxon>Bacillati</taxon>
        <taxon>Bacillota</taxon>
        <taxon>Bacilli</taxon>
        <taxon>Bacillales</taxon>
        <taxon>Staphylococcaceae</taxon>
        <taxon>Staphylococcus</taxon>
    </lineage>
</organism>
<accession>P0C7Y5</accession>
<accession>B9ZUX7</accession>
<evidence type="ECO:0000250" key="1">
    <source>
        <dbReference type="UniProtKB" id="A9JX05"/>
    </source>
</evidence>
<evidence type="ECO:0000305" key="2"/>
<protein>
    <recommendedName>
        <fullName>Phenol-soluble modulin alpha 1 peptide</fullName>
    </recommendedName>
</protein>